<feature type="chain" id="PRO_0000052433" description="Flavohemoprotein">
    <location>
        <begin position="1"/>
        <end position="396"/>
    </location>
</feature>
<feature type="domain" description="Globin" evidence="2">
    <location>
        <begin position="1"/>
        <end position="136"/>
    </location>
</feature>
<feature type="domain" description="FAD-binding FR-type" evidence="1">
    <location>
        <begin position="150"/>
        <end position="255"/>
    </location>
</feature>
<feature type="region of interest" description="Reductase">
    <location>
        <begin position="147"/>
        <end position="396"/>
    </location>
</feature>
<feature type="active site" description="Charge relay system" evidence="1">
    <location>
        <position position="95"/>
    </location>
</feature>
<feature type="active site" description="Charge relay system" evidence="1">
    <location>
        <position position="135"/>
    </location>
</feature>
<feature type="binding site" description="proximal binding residue" evidence="1">
    <location>
        <position position="85"/>
    </location>
    <ligand>
        <name>heme b</name>
        <dbReference type="ChEBI" id="CHEBI:60344"/>
    </ligand>
    <ligandPart>
        <name>Fe</name>
        <dbReference type="ChEBI" id="CHEBI:18248"/>
    </ligandPart>
</feature>
<feature type="binding site" evidence="1">
    <location>
        <position position="188"/>
    </location>
    <ligand>
        <name>FAD</name>
        <dbReference type="ChEBI" id="CHEBI:57692"/>
    </ligand>
</feature>
<feature type="binding site" evidence="1">
    <location>
        <begin position="204"/>
        <end position="207"/>
    </location>
    <ligand>
        <name>FAD</name>
        <dbReference type="ChEBI" id="CHEBI:57692"/>
    </ligand>
</feature>
<feature type="binding site" evidence="1">
    <location>
        <begin position="268"/>
        <end position="273"/>
    </location>
    <ligand>
        <name>NADP(+)</name>
        <dbReference type="ChEBI" id="CHEBI:58349"/>
    </ligand>
</feature>
<feature type="binding site" evidence="1">
    <location>
        <begin position="389"/>
        <end position="392"/>
    </location>
    <ligand>
        <name>FAD</name>
        <dbReference type="ChEBI" id="CHEBI:57692"/>
    </ligand>
</feature>
<feature type="site" description="Involved in heme-bound ligand stabilization and O-O bond activation" evidence="1">
    <location>
        <position position="29"/>
    </location>
</feature>
<feature type="site" description="Influences the redox potential of the prosthetic heme and FAD groups" evidence="1">
    <location>
        <position position="84"/>
    </location>
</feature>
<feature type="site" description="Influences the redox potential of the prosthetic heme and FAD groups" evidence="1">
    <location>
        <position position="388"/>
    </location>
</feature>
<reference key="1">
    <citation type="journal article" date="2002" name="Proc. Natl. Acad. Sci. U.S.A.">
        <title>Extensive mosaic structure revealed by the complete genome sequence of uropathogenic Escherichia coli.</title>
        <authorList>
            <person name="Welch R.A."/>
            <person name="Burland V."/>
            <person name="Plunkett G. III"/>
            <person name="Redford P."/>
            <person name="Roesch P."/>
            <person name="Rasko D."/>
            <person name="Buckles E.L."/>
            <person name="Liou S.-R."/>
            <person name="Boutin A."/>
            <person name="Hackett J."/>
            <person name="Stroud D."/>
            <person name="Mayhew G.F."/>
            <person name="Rose D.J."/>
            <person name="Zhou S."/>
            <person name="Schwartz D.C."/>
            <person name="Perna N.T."/>
            <person name="Mobley H.L.T."/>
            <person name="Donnenberg M.S."/>
            <person name="Blattner F.R."/>
        </authorList>
    </citation>
    <scope>NUCLEOTIDE SEQUENCE [LARGE SCALE GENOMIC DNA]</scope>
    <source>
        <strain>CFT073 / ATCC 700928 / UPEC</strain>
    </source>
</reference>
<keyword id="KW-0216">Detoxification</keyword>
<keyword id="KW-0274">FAD</keyword>
<keyword id="KW-0285">Flavoprotein</keyword>
<keyword id="KW-0349">Heme</keyword>
<keyword id="KW-0408">Iron</keyword>
<keyword id="KW-0479">Metal-binding</keyword>
<keyword id="KW-0520">NAD</keyword>
<keyword id="KW-0521">NADP</keyword>
<keyword id="KW-0560">Oxidoreductase</keyword>
<keyword id="KW-0561">Oxygen transport</keyword>
<keyword id="KW-1185">Reference proteome</keyword>
<keyword id="KW-0813">Transport</keyword>
<comment type="function">
    <text evidence="1">Is involved in NO detoxification in an aerobic process, termed nitric oxide dioxygenase (NOD) reaction that utilizes O(2) and NAD(P)H to convert NO to nitrate, which protects the bacterium from various noxious nitrogen compounds. Therefore, plays a central role in the inducible response to nitrosative stress.</text>
</comment>
<comment type="catalytic activity">
    <reaction evidence="1">
        <text>2 nitric oxide + NADPH + 2 O2 = 2 nitrate + NADP(+) + H(+)</text>
        <dbReference type="Rhea" id="RHEA:19465"/>
        <dbReference type="ChEBI" id="CHEBI:15378"/>
        <dbReference type="ChEBI" id="CHEBI:15379"/>
        <dbReference type="ChEBI" id="CHEBI:16480"/>
        <dbReference type="ChEBI" id="CHEBI:17632"/>
        <dbReference type="ChEBI" id="CHEBI:57783"/>
        <dbReference type="ChEBI" id="CHEBI:58349"/>
        <dbReference type="EC" id="1.14.12.17"/>
    </reaction>
</comment>
<comment type="catalytic activity">
    <reaction evidence="1">
        <text>2 nitric oxide + NADH + 2 O2 = 2 nitrate + NAD(+) + H(+)</text>
        <dbReference type="Rhea" id="RHEA:19469"/>
        <dbReference type="ChEBI" id="CHEBI:15378"/>
        <dbReference type="ChEBI" id="CHEBI:15379"/>
        <dbReference type="ChEBI" id="CHEBI:16480"/>
        <dbReference type="ChEBI" id="CHEBI:17632"/>
        <dbReference type="ChEBI" id="CHEBI:57540"/>
        <dbReference type="ChEBI" id="CHEBI:57945"/>
        <dbReference type="EC" id="1.14.12.17"/>
    </reaction>
</comment>
<comment type="cofactor">
    <cofactor evidence="1">
        <name>heme b</name>
        <dbReference type="ChEBI" id="CHEBI:60344"/>
    </cofactor>
    <text evidence="1">Binds 1 heme b (iron(II)-protoporphyrin IX) group per subunit.</text>
</comment>
<comment type="cofactor">
    <cofactor evidence="1">
        <name>FAD</name>
        <dbReference type="ChEBI" id="CHEBI:57692"/>
    </cofactor>
    <text evidence="1">Binds 1 FAD per subunit.</text>
</comment>
<comment type="domain">
    <text>Consists of two distinct domains; an N-terminal heme-containing oxygen-binding domain and a C-terminal reductase domain with binding sites for FAD and NAD(P)H.</text>
</comment>
<comment type="similarity">
    <text evidence="1">Belongs to the globin family. Two-domain flavohemoproteins subfamily.</text>
</comment>
<comment type="similarity">
    <text evidence="1">In the C-terminal section; belongs to the flavoprotein pyridine nucleotide cytochrome reductase family.</text>
</comment>
<protein>
    <recommendedName>
        <fullName evidence="1">Flavohemoprotein</fullName>
    </recommendedName>
    <alternativeName>
        <fullName evidence="1">Flavohemoglobin</fullName>
    </alternativeName>
    <alternativeName>
        <fullName evidence="1">Hemoglobin-like protein</fullName>
    </alternativeName>
    <alternativeName>
        <fullName evidence="1">Nitric oxide dioxygenase</fullName>
        <shortName evidence="1">NO oxygenase</shortName>
        <shortName evidence="1">NOD</shortName>
        <ecNumber evidence="1">1.14.12.17</ecNumber>
    </alternativeName>
</protein>
<accession>Q8FF30</accession>
<gene>
    <name evidence="1" type="primary">hmp</name>
    <name type="synonym">hmpA</name>
    <name type="ordered locus">c3075</name>
</gene>
<name>HMP_ECOL6</name>
<organism>
    <name type="scientific">Escherichia coli O6:H1 (strain CFT073 / ATCC 700928 / UPEC)</name>
    <dbReference type="NCBI Taxonomy" id="199310"/>
    <lineage>
        <taxon>Bacteria</taxon>
        <taxon>Pseudomonadati</taxon>
        <taxon>Pseudomonadota</taxon>
        <taxon>Gammaproteobacteria</taxon>
        <taxon>Enterobacterales</taxon>
        <taxon>Enterobacteriaceae</taxon>
        <taxon>Escherichia</taxon>
    </lineage>
</organism>
<evidence type="ECO:0000255" key="1">
    <source>
        <dbReference type="HAMAP-Rule" id="MF_01252"/>
    </source>
</evidence>
<evidence type="ECO:0000255" key="2">
    <source>
        <dbReference type="PROSITE-ProRule" id="PRU00238"/>
    </source>
</evidence>
<proteinExistence type="inferred from homology"/>
<dbReference type="EC" id="1.14.12.17" evidence="1"/>
<dbReference type="EMBL" id="AE014075">
    <property type="protein sequence ID" value="AAN81524.1"/>
    <property type="molecule type" value="Genomic_DNA"/>
</dbReference>
<dbReference type="RefSeq" id="WP_000883112.1">
    <property type="nucleotide sequence ID" value="NZ_CP051263.1"/>
</dbReference>
<dbReference type="SMR" id="Q8FF30"/>
<dbReference type="STRING" id="199310.c3075"/>
<dbReference type="KEGG" id="ecc:c3075"/>
<dbReference type="eggNOG" id="COG1017">
    <property type="taxonomic scope" value="Bacteria"/>
</dbReference>
<dbReference type="eggNOG" id="COG1018">
    <property type="taxonomic scope" value="Bacteria"/>
</dbReference>
<dbReference type="HOGENOM" id="CLU_003827_12_0_6"/>
<dbReference type="BioCyc" id="ECOL199310:C3075-MONOMER"/>
<dbReference type="Proteomes" id="UP000001410">
    <property type="component" value="Chromosome"/>
</dbReference>
<dbReference type="GO" id="GO:0071949">
    <property type="term" value="F:FAD binding"/>
    <property type="evidence" value="ECO:0007669"/>
    <property type="project" value="InterPro"/>
</dbReference>
<dbReference type="GO" id="GO:0020037">
    <property type="term" value="F:heme binding"/>
    <property type="evidence" value="ECO:0007669"/>
    <property type="project" value="InterPro"/>
</dbReference>
<dbReference type="GO" id="GO:0046872">
    <property type="term" value="F:metal ion binding"/>
    <property type="evidence" value="ECO:0007669"/>
    <property type="project" value="UniProtKB-KW"/>
</dbReference>
<dbReference type="GO" id="GO:0008941">
    <property type="term" value="F:nitric oxide dioxygenase NAD(P)H activity"/>
    <property type="evidence" value="ECO:0007669"/>
    <property type="project" value="UniProtKB-UniRule"/>
</dbReference>
<dbReference type="GO" id="GO:0019825">
    <property type="term" value="F:oxygen binding"/>
    <property type="evidence" value="ECO:0007669"/>
    <property type="project" value="InterPro"/>
</dbReference>
<dbReference type="GO" id="GO:0005344">
    <property type="term" value="F:oxygen carrier activity"/>
    <property type="evidence" value="ECO:0007669"/>
    <property type="project" value="UniProtKB-UniRule"/>
</dbReference>
<dbReference type="GO" id="GO:0071500">
    <property type="term" value="P:cellular response to nitrosative stress"/>
    <property type="evidence" value="ECO:0007669"/>
    <property type="project" value="TreeGrafter"/>
</dbReference>
<dbReference type="GO" id="GO:0046210">
    <property type="term" value="P:nitric oxide catabolic process"/>
    <property type="evidence" value="ECO:0007669"/>
    <property type="project" value="TreeGrafter"/>
</dbReference>
<dbReference type="GO" id="GO:0009636">
    <property type="term" value="P:response to toxic substance"/>
    <property type="evidence" value="ECO:0007669"/>
    <property type="project" value="UniProtKB-KW"/>
</dbReference>
<dbReference type="CDD" id="cd06184">
    <property type="entry name" value="flavohem_like_fad_nad_binding"/>
    <property type="match status" value="1"/>
</dbReference>
<dbReference type="CDD" id="cd14776">
    <property type="entry name" value="HmpEc-globin-like"/>
    <property type="match status" value="1"/>
</dbReference>
<dbReference type="FunFam" id="1.10.490.10:FF:000003">
    <property type="entry name" value="Flavohemoprotein"/>
    <property type="match status" value="1"/>
</dbReference>
<dbReference type="FunFam" id="2.40.30.10:FF:000034">
    <property type="entry name" value="Flavohemoprotein"/>
    <property type="match status" value="1"/>
</dbReference>
<dbReference type="FunFam" id="3.40.50.80:FF:000010">
    <property type="entry name" value="Flavohemoprotein"/>
    <property type="match status" value="1"/>
</dbReference>
<dbReference type="Gene3D" id="1.10.490.10">
    <property type="entry name" value="Globins"/>
    <property type="match status" value="1"/>
</dbReference>
<dbReference type="Gene3D" id="3.40.50.80">
    <property type="entry name" value="Nucleotide-binding domain of ferredoxin-NADP reductase (FNR) module"/>
    <property type="match status" value="1"/>
</dbReference>
<dbReference type="Gene3D" id="2.40.30.10">
    <property type="entry name" value="Translation factors"/>
    <property type="match status" value="1"/>
</dbReference>
<dbReference type="HAMAP" id="MF_01252">
    <property type="entry name" value="Hmp"/>
    <property type="match status" value="1"/>
</dbReference>
<dbReference type="InterPro" id="IPR008333">
    <property type="entry name" value="Cbr1-like_FAD-bd_dom"/>
</dbReference>
<dbReference type="InterPro" id="IPR017927">
    <property type="entry name" value="FAD-bd_FR_type"/>
</dbReference>
<dbReference type="InterPro" id="IPR039261">
    <property type="entry name" value="FNR_nucleotide-bd"/>
</dbReference>
<dbReference type="InterPro" id="IPR000971">
    <property type="entry name" value="Globin"/>
</dbReference>
<dbReference type="InterPro" id="IPR009050">
    <property type="entry name" value="Globin-like_sf"/>
</dbReference>
<dbReference type="InterPro" id="IPR012292">
    <property type="entry name" value="Globin/Proto"/>
</dbReference>
<dbReference type="InterPro" id="IPR023950">
    <property type="entry name" value="Hmp"/>
</dbReference>
<dbReference type="InterPro" id="IPR001433">
    <property type="entry name" value="OxRdtase_FAD/NAD-bd"/>
</dbReference>
<dbReference type="InterPro" id="IPR017938">
    <property type="entry name" value="Riboflavin_synthase-like_b-brl"/>
</dbReference>
<dbReference type="NCBIfam" id="NF009805">
    <property type="entry name" value="PRK13289.1"/>
    <property type="match status" value="1"/>
</dbReference>
<dbReference type="PANTHER" id="PTHR43396">
    <property type="entry name" value="FLAVOHEMOPROTEIN"/>
    <property type="match status" value="1"/>
</dbReference>
<dbReference type="PANTHER" id="PTHR43396:SF3">
    <property type="entry name" value="FLAVOHEMOPROTEIN"/>
    <property type="match status" value="1"/>
</dbReference>
<dbReference type="Pfam" id="PF00970">
    <property type="entry name" value="FAD_binding_6"/>
    <property type="match status" value="1"/>
</dbReference>
<dbReference type="Pfam" id="PF00042">
    <property type="entry name" value="Globin"/>
    <property type="match status" value="1"/>
</dbReference>
<dbReference type="Pfam" id="PF00175">
    <property type="entry name" value="NAD_binding_1"/>
    <property type="match status" value="1"/>
</dbReference>
<dbReference type="PRINTS" id="PR00410">
    <property type="entry name" value="PHEHYDRXLASE"/>
</dbReference>
<dbReference type="SUPFAM" id="SSF52343">
    <property type="entry name" value="Ferredoxin reductase-like, C-terminal NADP-linked domain"/>
    <property type="match status" value="1"/>
</dbReference>
<dbReference type="SUPFAM" id="SSF46458">
    <property type="entry name" value="Globin-like"/>
    <property type="match status" value="1"/>
</dbReference>
<dbReference type="SUPFAM" id="SSF63380">
    <property type="entry name" value="Riboflavin synthase domain-like"/>
    <property type="match status" value="1"/>
</dbReference>
<dbReference type="PROSITE" id="PS51384">
    <property type="entry name" value="FAD_FR"/>
    <property type="match status" value="1"/>
</dbReference>
<dbReference type="PROSITE" id="PS01033">
    <property type="entry name" value="GLOBIN"/>
    <property type="match status" value="1"/>
</dbReference>
<sequence>MLDAQTIATVKATIPLLVETGPKLTAHFYDRMFTHNPELKEIFNMSNQRNGDQREALFNAIAAYASNIENLPALLPAVEKIAQKHTSFQIKPEQYNIVGEHLLATLDEMFSPGQEVLDAWGKAYGVLANVFINREAEIYNENASKAGGWEGTRDFRIVAKTPRSALITSFELEPVDGGAVAEYRPGQYLGVWLKPEGFPHQEIRQYSLTRKPDGKGYRIAVKREEGGQVSNWLHNHANVGDVVKLVAPAGDFFMAVADDTPVTLISAGVGQTPMLAMLDTLAKAGHTAQVNWFHAAENGDVHAFADEVKELGLSLPRFTAHTWYRQPNEADRAKGQFDSEGLMDLSKLEGAFSDPTMQFYLCGPVGFMQFAAKQLVDLGVKQENIHYECFGPHKVL</sequence>